<evidence type="ECO:0000250" key="1">
    <source>
        <dbReference type="UniProtKB" id="Q9I7K0"/>
    </source>
</evidence>
<evidence type="ECO:0000256" key="2">
    <source>
        <dbReference type="SAM" id="MobiDB-lite"/>
    </source>
</evidence>
<evidence type="ECO:0000305" key="3"/>
<evidence type="ECO:0000312" key="4">
    <source>
        <dbReference type="EMBL" id="EDV91138.1"/>
    </source>
</evidence>
<name>JUPIT_DROGR</name>
<gene>
    <name evidence="1" type="primary">Jupiter</name>
    <name type="ORF">GH17288</name>
</gene>
<sequence length="207" mass="22069">MATYAAFKHVELYNVGKAKKRVLRAPGGGSSDIFGSDMPQTPRNVKNRMASNIFSADKDAAQKNNVRQGAHRFYFIGDAPRRGQKPVDSYSRLFGEPARPITPGKNHMKSSIPFGQNTNAAQQLLANNKGKYNGKSGSVSSASSSVSSSTENLKINVGNRSDGNPVTGEGYKAGGNDYIQPTAAMNGGNQVINKNRVPPGGYSSGLW</sequence>
<comment type="function">
    <text evidence="1">Binds to all microtubule populations.</text>
</comment>
<comment type="subcellular location">
    <subcellularLocation>
        <location evidence="1">Nucleus</location>
    </subcellularLocation>
    <subcellularLocation>
        <location evidence="1">Cytoplasm</location>
    </subcellularLocation>
    <subcellularLocation>
        <location evidence="1">Cytoplasm</location>
        <location evidence="1">Cytoskeleton</location>
    </subcellularLocation>
    <subcellularLocation>
        <location evidence="1">Cytoplasm</location>
        <location evidence="1">Cytoskeleton</location>
        <location evidence="1">Spindle</location>
    </subcellularLocation>
</comment>
<comment type="similarity">
    <text evidence="3">Belongs to the MAP Jupiter family.</text>
</comment>
<organism>
    <name type="scientific">Drosophila grimshawi</name>
    <name type="common">Hawaiian fruit fly</name>
    <name type="synonym">Idiomyia grimshawi</name>
    <dbReference type="NCBI Taxonomy" id="7222"/>
    <lineage>
        <taxon>Eukaryota</taxon>
        <taxon>Metazoa</taxon>
        <taxon>Ecdysozoa</taxon>
        <taxon>Arthropoda</taxon>
        <taxon>Hexapoda</taxon>
        <taxon>Insecta</taxon>
        <taxon>Pterygota</taxon>
        <taxon>Neoptera</taxon>
        <taxon>Endopterygota</taxon>
        <taxon>Diptera</taxon>
        <taxon>Brachycera</taxon>
        <taxon>Muscomorpha</taxon>
        <taxon>Ephydroidea</taxon>
        <taxon>Drosophilidae</taxon>
        <taxon>Drosophila</taxon>
        <taxon>Hawaiian Drosophila</taxon>
    </lineage>
</organism>
<feature type="chain" id="PRO_0000355127" description="Microtubule-associated protein Jupiter">
    <location>
        <begin position="1"/>
        <end position="207"/>
    </location>
</feature>
<feature type="region of interest" description="Disordered" evidence="2">
    <location>
        <begin position="129"/>
        <end position="174"/>
    </location>
</feature>
<feature type="region of interest" description="Disordered" evidence="2">
    <location>
        <begin position="188"/>
        <end position="207"/>
    </location>
</feature>
<feature type="compositionally biased region" description="Low complexity" evidence="2">
    <location>
        <begin position="136"/>
        <end position="149"/>
    </location>
</feature>
<feature type="compositionally biased region" description="Polar residues" evidence="2">
    <location>
        <begin position="150"/>
        <end position="164"/>
    </location>
</feature>
<feature type="modified residue" description="Phosphoserine" evidence="1">
    <location>
        <position position="30"/>
    </location>
</feature>
<feature type="modified residue" description="Phosphothreonine" evidence="1">
    <location>
        <position position="41"/>
    </location>
</feature>
<feature type="modified residue" description="Phosphothreonine" evidence="1">
    <location>
        <position position="102"/>
    </location>
</feature>
<feature type="modified residue" description="Phosphoserine" evidence="1">
    <location>
        <position position="111"/>
    </location>
</feature>
<feature type="modified residue" description="Phosphoserine" evidence="1">
    <location>
        <position position="138"/>
    </location>
</feature>
<feature type="modified residue" description="Phosphoserine" evidence="1">
    <location>
        <position position="149"/>
    </location>
</feature>
<proteinExistence type="inferred from homology"/>
<accession>B4JUG8</accession>
<keyword id="KW-0963">Cytoplasm</keyword>
<keyword id="KW-0206">Cytoskeleton</keyword>
<keyword id="KW-0493">Microtubule</keyword>
<keyword id="KW-0539">Nucleus</keyword>
<keyword id="KW-0597">Phosphoprotein</keyword>
<keyword id="KW-1185">Reference proteome</keyword>
<dbReference type="EMBL" id="CH916374">
    <property type="protein sequence ID" value="EDV91138.1"/>
    <property type="molecule type" value="Genomic_DNA"/>
</dbReference>
<dbReference type="FunCoup" id="B4JUG8">
    <property type="interactions" value="149"/>
</dbReference>
<dbReference type="STRING" id="7222.B4JUG8"/>
<dbReference type="EnsemblMetazoa" id="FBtr0152702">
    <property type="protein sequence ID" value="FBpp0151194"/>
    <property type="gene ID" value="FBgn0124758"/>
</dbReference>
<dbReference type="EnsemblMetazoa" id="XM_001994473.2">
    <property type="protein sequence ID" value="XP_001994509.1"/>
    <property type="gene ID" value="LOC6568626"/>
</dbReference>
<dbReference type="EnsemblMetazoa" id="XM_032740620.1">
    <property type="protein sequence ID" value="XP_032596511.1"/>
    <property type="gene ID" value="LOC6568626"/>
</dbReference>
<dbReference type="GeneID" id="6568626"/>
<dbReference type="KEGG" id="dgr:6568626"/>
<dbReference type="CTD" id="41392"/>
<dbReference type="eggNOG" id="ENOG502S7TC">
    <property type="taxonomic scope" value="Eukaryota"/>
</dbReference>
<dbReference type="HOGENOM" id="CLU_076719_0_0_1"/>
<dbReference type="InParanoid" id="B4JUG8"/>
<dbReference type="OMA" id="GANDFHQ"/>
<dbReference type="OrthoDB" id="6367565at2759"/>
<dbReference type="PhylomeDB" id="B4JUG8"/>
<dbReference type="ChiTaRS" id="Jupiter">
    <property type="organism name" value="fly"/>
</dbReference>
<dbReference type="Proteomes" id="UP000001070">
    <property type="component" value="Unassembled WGS sequence"/>
</dbReference>
<dbReference type="GO" id="GO:0005829">
    <property type="term" value="C:cytosol"/>
    <property type="evidence" value="ECO:0000250"/>
    <property type="project" value="UniProtKB"/>
</dbReference>
<dbReference type="GO" id="GO:0005874">
    <property type="term" value="C:microtubule"/>
    <property type="evidence" value="ECO:0007669"/>
    <property type="project" value="UniProtKB-KW"/>
</dbReference>
<dbReference type="GO" id="GO:0005875">
    <property type="term" value="C:microtubule associated complex"/>
    <property type="evidence" value="ECO:0000250"/>
    <property type="project" value="UniProtKB"/>
</dbReference>
<dbReference type="GO" id="GO:0005634">
    <property type="term" value="C:nucleus"/>
    <property type="evidence" value="ECO:0000250"/>
    <property type="project" value="UniProtKB"/>
</dbReference>
<dbReference type="GO" id="GO:0005819">
    <property type="term" value="C:spindle"/>
    <property type="evidence" value="ECO:0007669"/>
    <property type="project" value="UniProtKB-SubCell"/>
</dbReference>
<dbReference type="GO" id="GO:0008017">
    <property type="term" value="F:microtubule binding"/>
    <property type="evidence" value="ECO:0000250"/>
    <property type="project" value="UniProtKB"/>
</dbReference>
<dbReference type="GO" id="GO:0005200">
    <property type="term" value="F:structural constituent of cytoskeleton"/>
    <property type="evidence" value="ECO:0000250"/>
    <property type="project" value="UniProtKB"/>
</dbReference>
<dbReference type="GO" id="GO:0031116">
    <property type="term" value="P:positive regulation of microtubule polymerization"/>
    <property type="evidence" value="ECO:0000250"/>
    <property type="project" value="UniProtKB"/>
</dbReference>
<dbReference type="InterPro" id="IPR033335">
    <property type="entry name" value="JUPITER"/>
</dbReference>
<dbReference type="PANTHER" id="PTHR34930">
    <property type="entry name" value="GEO05313P1"/>
    <property type="match status" value="1"/>
</dbReference>
<dbReference type="PANTHER" id="PTHR34930:SF2">
    <property type="entry name" value="MICROTUBULE-ASSOCIATED PROTEIN JUPITER"/>
    <property type="match status" value="1"/>
</dbReference>
<dbReference type="Pfam" id="PF17054">
    <property type="entry name" value="JUPITER"/>
    <property type="match status" value="2"/>
</dbReference>
<protein>
    <recommendedName>
        <fullName evidence="1">Microtubule-associated protein Jupiter</fullName>
    </recommendedName>
</protein>
<reference evidence="4" key="1">
    <citation type="journal article" date="2007" name="Nature">
        <title>Evolution of genes and genomes on the Drosophila phylogeny.</title>
        <authorList>
            <consortium name="Drosophila 12 genomes consortium"/>
        </authorList>
    </citation>
    <scope>NUCLEOTIDE SEQUENCE [LARGE SCALE GENOMIC DNA]</scope>
    <source>
        <strain evidence="4">Tucson 15287-2541.00</strain>
    </source>
</reference>